<name>DOF14_ARATH</name>
<reference key="1">
    <citation type="journal article" date="2000" name="Nature">
        <title>Sequence and analysis of chromosome 1 of the plant Arabidopsis thaliana.</title>
        <authorList>
            <person name="Theologis A."/>
            <person name="Ecker J.R."/>
            <person name="Palm C.J."/>
            <person name="Federspiel N.A."/>
            <person name="Kaul S."/>
            <person name="White O."/>
            <person name="Alonso J."/>
            <person name="Altafi H."/>
            <person name="Araujo R."/>
            <person name="Bowman C.L."/>
            <person name="Brooks S.Y."/>
            <person name="Buehler E."/>
            <person name="Chan A."/>
            <person name="Chao Q."/>
            <person name="Chen H."/>
            <person name="Cheuk R.F."/>
            <person name="Chin C.W."/>
            <person name="Chung M.K."/>
            <person name="Conn L."/>
            <person name="Conway A.B."/>
            <person name="Conway A.R."/>
            <person name="Creasy T.H."/>
            <person name="Dewar K."/>
            <person name="Dunn P."/>
            <person name="Etgu P."/>
            <person name="Feldblyum T.V."/>
            <person name="Feng J.-D."/>
            <person name="Fong B."/>
            <person name="Fujii C.Y."/>
            <person name="Gill J.E."/>
            <person name="Goldsmith A.D."/>
            <person name="Haas B."/>
            <person name="Hansen N.F."/>
            <person name="Hughes B."/>
            <person name="Huizar L."/>
            <person name="Hunter J.L."/>
            <person name="Jenkins J."/>
            <person name="Johnson-Hopson C."/>
            <person name="Khan S."/>
            <person name="Khaykin E."/>
            <person name="Kim C.J."/>
            <person name="Koo H.L."/>
            <person name="Kremenetskaia I."/>
            <person name="Kurtz D.B."/>
            <person name="Kwan A."/>
            <person name="Lam B."/>
            <person name="Langin-Hooper S."/>
            <person name="Lee A."/>
            <person name="Lee J.M."/>
            <person name="Lenz C.A."/>
            <person name="Li J.H."/>
            <person name="Li Y.-P."/>
            <person name="Lin X."/>
            <person name="Liu S.X."/>
            <person name="Liu Z.A."/>
            <person name="Luros J.S."/>
            <person name="Maiti R."/>
            <person name="Marziali A."/>
            <person name="Militscher J."/>
            <person name="Miranda M."/>
            <person name="Nguyen M."/>
            <person name="Nierman W.C."/>
            <person name="Osborne B.I."/>
            <person name="Pai G."/>
            <person name="Peterson J."/>
            <person name="Pham P.K."/>
            <person name="Rizzo M."/>
            <person name="Rooney T."/>
            <person name="Rowley D."/>
            <person name="Sakano H."/>
            <person name="Salzberg S.L."/>
            <person name="Schwartz J.R."/>
            <person name="Shinn P."/>
            <person name="Southwick A.M."/>
            <person name="Sun H."/>
            <person name="Tallon L.J."/>
            <person name="Tambunga G."/>
            <person name="Toriumi M.J."/>
            <person name="Town C.D."/>
            <person name="Utterback T."/>
            <person name="Van Aken S."/>
            <person name="Vaysberg M."/>
            <person name="Vysotskaia V.S."/>
            <person name="Walker M."/>
            <person name="Wu D."/>
            <person name="Yu G."/>
            <person name="Fraser C.M."/>
            <person name="Venter J.C."/>
            <person name="Davis R.W."/>
        </authorList>
    </citation>
    <scope>NUCLEOTIDE SEQUENCE [LARGE SCALE GENOMIC DNA]</scope>
    <source>
        <strain>cv. Columbia</strain>
    </source>
</reference>
<reference key="2">
    <citation type="journal article" date="2017" name="Plant J.">
        <title>Araport11: a complete reannotation of the Arabidopsis thaliana reference genome.</title>
        <authorList>
            <person name="Cheng C.Y."/>
            <person name="Krishnakumar V."/>
            <person name="Chan A.P."/>
            <person name="Thibaud-Nissen F."/>
            <person name="Schobel S."/>
            <person name="Town C.D."/>
        </authorList>
    </citation>
    <scope>GENOME REANNOTATION</scope>
    <source>
        <strain>cv. Columbia</strain>
    </source>
</reference>
<reference key="3">
    <citation type="journal article" date="2004" name="Genome Res.">
        <title>Whole genome sequence comparisons and 'full-length' cDNA sequences: a combined approach to evaluate and improve Arabidopsis genome annotation.</title>
        <authorList>
            <person name="Castelli V."/>
            <person name="Aury J.-M."/>
            <person name="Jaillon O."/>
            <person name="Wincker P."/>
            <person name="Clepet C."/>
            <person name="Menard M."/>
            <person name="Cruaud C."/>
            <person name="Quetier F."/>
            <person name="Scarpelli C."/>
            <person name="Schaechter V."/>
            <person name="Temple G."/>
            <person name="Caboche M."/>
            <person name="Weissenbach J."/>
            <person name="Salanoubat M."/>
        </authorList>
    </citation>
    <scope>NUCLEOTIDE SEQUENCE [LARGE SCALE MRNA]</scope>
    <source>
        <strain>cv. Columbia</strain>
    </source>
</reference>
<reference key="4">
    <citation type="journal article" date="2002" name="Trends Plant Sci.">
        <title>The Dof family of plant transcription factors.</title>
        <authorList>
            <person name="Yanagisawa S."/>
        </authorList>
    </citation>
    <scope>GENE FAMILY</scope>
    <scope>NOMENCLATURE</scope>
</reference>
<feature type="chain" id="PRO_0000074266" description="Dof zinc finger protein DOF1.4">
    <location>
        <begin position="1"/>
        <end position="311"/>
    </location>
</feature>
<feature type="zinc finger region" description="Dof-type" evidence="2">
    <location>
        <begin position="27"/>
        <end position="81"/>
    </location>
</feature>
<feature type="region of interest" description="Disordered" evidence="3">
    <location>
        <begin position="1"/>
        <end position="29"/>
    </location>
</feature>
<feature type="region of interest" description="Disordered" evidence="3">
    <location>
        <begin position="72"/>
        <end position="110"/>
    </location>
</feature>
<feature type="compositionally biased region" description="Polar residues" evidence="3">
    <location>
        <begin position="1"/>
        <end position="12"/>
    </location>
</feature>
<feature type="compositionally biased region" description="Low complexity" evidence="3">
    <location>
        <begin position="13"/>
        <end position="26"/>
    </location>
</feature>
<feature type="compositionally biased region" description="Low complexity" evidence="3">
    <location>
        <begin position="85"/>
        <end position="107"/>
    </location>
</feature>
<feature type="binding site" evidence="2">
    <location>
        <position position="29"/>
    </location>
    <ligand>
        <name>Zn(2+)</name>
        <dbReference type="ChEBI" id="CHEBI:29105"/>
    </ligand>
</feature>
<feature type="binding site" evidence="2">
    <location>
        <position position="32"/>
    </location>
    <ligand>
        <name>Zn(2+)</name>
        <dbReference type="ChEBI" id="CHEBI:29105"/>
    </ligand>
</feature>
<feature type="binding site" evidence="2">
    <location>
        <position position="54"/>
    </location>
    <ligand>
        <name>Zn(2+)</name>
        <dbReference type="ChEBI" id="CHEBI:29105"/>
    </ligand>
</feature>
<feature type="binding site" evidence="2">
    <location>
        <position position="57"/>
    </location>
    <ligand>
        <name>Zn(2+)</name>
        <dbReference type="ChEBI" id="CHEBI:29105"/>
    </ligand>
</feature>
<feature type="sequence conflict" description="In Ref. 3; BX816643." evidence="4" ref="3">
    <original>D</original>
    <variation>Y</variation>
    <location>
        <position position="145"/>
    </location>
</feature>
<feature type="sequence conflict" description="In Ref. 3; BX816643." evidence="4" ref="3">
    <original>H</original>
    <variation>N</variation>
    <location>
        <position position="182"/>
    </location>
</feature>
<feature type="sequence conflict" description="In Ref. 3; BX816643." evidence="4" ref="3">
    <original>HP</original>
    <variation>NQ</variation>
    <location>
        <begin position="217"/>
        <end position="218"/>
    </location>
</feature>
<comment type="function">
    <text evidence="1">Transcription factor that binds specifically to a 5'-AA[AG]G-3' consensus core sequence.</text>
</comment>
<comment type="subcellular location">
    <subcellularLocation>
        <location evidence="4">Nucleus</location>
    </subcellularLocation>
</comment>
<comment type="alternative products">
    <event type="alternative splicing"/>
    <isoform>
        <id>Q9FZA4-1</id>
        <name>1</name>
        <sequence type="displayed"/>
    </isoform>
    <text>A number of isoforms are produced. According to EST sequences.</text>
</comment>
<comment type="sequence caution" evidence="4">
    <conflict type="frameshift">
        <sequence resource="EMBL" id="BX816643"/>
    </conflict>
</comment>
<evidence type="ECO:0000250" key="1"/>
<evidence type="ECO:0000255" key="2">
    <source>
        <dbReference type="PROSITE-ProRule" id="PRU00071"/>
    </source>
</evidence>
<evidence type="ECO:0000256" key="3">
    <source>
        <dbReference type="SAM" id="MobiDB-lite"/>
    </source>
</evidence>
<evidence type="ECO:0000305" key="4"/>
<dbReference type="EMBL" id="AC021044">
    <property type="protein sequence ID" value="AAF98424.1"/>
    <property type="molecule type" value="Genomic_DNA"/>
</dbReference>
<dbReference type="EMBL" id="CP002684">
    <property type="protein sequence ID" value="AEE30950.1"/>
    <property type="molecule type" value="Genomic_DNA"/>
</dbReference>
<dbReference type="EMBL" id="BX816643">
    <property type="status" value="NOT_ANNOTATED_CDS"/>
    <property type="molecule type" value="mRNA"/>
</dbReference>
<dbReference type="PIR" id="D86409">
    <property type="entry name" value="D86409"/>
</dbReference>
<dbReference type="RefSeq" id="NP_174152.3">
    <molecule id="Q9FZA4-1"/>
    <property type="nucleotide sequence ID" value="NM_102596.3"/>
</dbReference>
<dbReference type="BioGRID" id="24960">
    <property type="interactions" value="4"/>
</dbReference>
<dbReference type="FunCoup" id="Q9FZA4">
    <property type="interactions" value="439"/>
</dbReference>
<dbReference type="PaxDb" id="3702-AT1G28310.2"/>
<dbReference type="ProteomicsDB" id="222102">
    <molecule id="Q9FZA4-1"/>
</dbReference>
<dbReference type="EnsemblPlants" id="AT1G28310.1">
    <molecule id="Q9FZA4-1"/>
    <property type="protein sequence ID" value="AT1G28310.1"/>
    <property type="gene ID" value="AT1G28310"/>
</dbReference>
<dbReference type="GeneID" id="839725"/>
<dbReference type="Gramene" id="AT1G28310.1">
    <molecule id="Q9FZA4-1"/>
    <property type="protein sequence ID" value="AT1G28310.1"/>
    <property type="gene ID" value="AT1G28310"/>
</dbReference>
<dbReference type="KEGG" id="ath:AT1G28310"/>
<dbReference type="Araport" id="AT1G28310"/>
<dbReference type="TAIR" id="AT1G28310"/>
<dbReference type="eggNOG" id="ENOG502RBT7">
    <property type="taxonomic scope" value="Eukaryota"/>
</dbReference>
<dbReference type="HOGENOM" id="CLU_036438_2_0_1"/>
<dbReference type="InParanoid" id="Q9FZA4"/>
<dbReference type="OrthoDB" id="1927254at2759"/>
<dbReference type="PhylomeDB" id="Q9FZA4"/>
<dbReference type="PRO" id="PR:Q9FZA4"/>
<dbReference type="Proteomes" id="UP000006548">
    <property type="component" value="Chromosome 1"/>
</dbReference>
<dbReference type="ExpressionAtlas" id="Q9FZA4">
    <property type="expression patterns" value="baseline and differential"/>
</dbReference>
<dbReference type="GO" id="GO:0005634">
    <property type="term" value="C:nucleus"/>
    <property type="evidence" value="ECO:0007669"/>
    <property type="project" value="UniProtKB-SubCell"/>
</dbReference>
<dbReference type="GO" id="GO:0003677">
    <property type="term" value="F:DNA binding"/>
    <property type="evidence" value="ECO:0007669"/>
    <property type="project" value="UniProtKB-KW"/>
</dbReference>
<dbReference type="GO" id="GO:0003700">
    <property type="term" value="F:DNA-binding transcription factor activity"/>
    <property type="evidence" value="ECO:0007669"/>
    <property type="project" value="InterPro"/>
</dbReference>
<dbReference type="GO" id="GO:0008270">
    <property type="term" value="F:zinc ion binding"/>
    <property type="evidence" value="ECO:0007669"/>
    <property type="project" value="UniProtKB-KW"/>
</dbReference>
<dbReference type="InterPro" id="IPR045174">
    <property type="entry name" value="Dof"/>
</dbReference>
<dbReference type="InterPro" id="IPR003851">
    <property type="entry name" value="Znf_Dof"/>
</dbReference>
<dbReference type="PANTHER" id="PTHR31992:SF141">
    <property type="entry name" value="DOF ZINC FINGER PROTEIN DOF1.4"/>
    <property type="match status" value="1"/>
</dbReference>
<dbReference type="PANTHER" id="PTHR31992">
    <property type="entry name" value="DOF ZINC FINGER PROTEIN DOF1.4-RELATED"/>
    <property type="match status" value="1"/>
</dbReference>
<dbReference type="Pfam" id="PF02701">
    <property type="entry name" value="Zn_ribbon_Dof"/>
    <property type="match status" value="1"/>
</dbReference>
<dbReference type="PROSITE" id="PS01361">
    <property type="entry name" value="ZF_DOF_1"/>
    <property type="match status" value="1"/>
</dbReference>
<dbReference type="PROSITE" id="PS50884">
    <property type="entry name" value="ZF_DOF_2"/>
    <property type="match status" value="1"/>
</dbReference>
<organism>
    <name type="scientific">Arabidopsis thaliana</name>
    <name type="common">Mouse-ear cress</name>
    <dbReference type="NCBI Taxonomy" id="3702"/>
    <lineage>
        <taxon>Eukaryota</taxon>
        <taxon>Viridiplantae</taxon>
        <taxon>Streptophyta</taxon>
        <taxon>Embryophyta</taxon>
        <taxon>Tracheophyta</taxon>
        <taxon>Spermatophyta</taxon>
        <taxon>Magnoliopsida</taxon>
        <taxon>eudicotyledons</taxon>
        <taxon>Gunneridae</taxon>
        <taxon>Pentapetalae</taxon>
        <taxon>rosids</taxon>
        <taxon>malvids</taxon>
        <taxon>Brassicales</taxon>
        <taxon>Brassicaceae</taxon>
        <taxon>Camelineae</taxon>
        <taxon>Arabidopsis</taxon>
    </lineage>
</organism>
<proteinExistence type="evidence at transcript level"/>
<keyword id="KW-0025">Alternative splicing</keyword>
<keyword id="KW-0238">DNA-binding</keyword>
<keyword id="KW-0479">Metal-binding</keyword>
<keyword id="KW-0539">Nucleus</keyword>
<keyword id="KW-1185">Reference proteome</keyword>
<keyword id="KW-0804">Transcription</keyword>
<keyword id="KW-0805">Transcription regulation</keyword>
<keyword id="KW-0862">Zinc</keyword>
<keyword id="KW-0863">Zinc-finger</keyword>
<accession>Q9FZA4</accession>
<sequence length="311" mass="34021">MQSKNMIVASSHQQQQQQQPQQPQPQLKCPRCDSSNTKFCYYNNYSLSQPRHFCKACKRYWTRGGTLRNVPVGGSYRKNKRVKRPSTATTTTASTVSTTNSSSPNNPHQISHFSSMNHHPLFYGLSDHMSSCNNNLPMIPSRFSDSSKTCSSSGLESEFLSSGFSSLSALGLGLPHQMSHDHTINGSFINNSTTNKPFLLSGLFGSSMSSSSTLLQHPHKPMNNGGDMLGQSHLQTLASLQDLHVGGNNEDMKYKEGKLDQISGNINGFMSSSSSLDPSNYNNMWNNASVVNGAWLDPTNNNVGSSLTSLI</sequence>
<protein>
    <recommendedName>
        <fullName>Dof zinc finger protein DOF1.4</fullName>
        <shortName>AtDOF1.4</shortName>
    </recommendedName>
</protein>
<gene>
    <name type="primary">DOF1.4</name>
    <name type="ordered locus">At1g28310</name>
    <name type="ORF">F3H9.4</name>
</gene>